<sequence>MTSKTSESGTGTQSTIVQLRNLPDLTEISHLEIDAPVVEILKKTVLFQLNSLNICISNFALDELVNLVTVQMDGMFRNLHNLTLLQRRSQASQADLKLLLREFNLDAPSLYQQFQASEFIKSKHSTEYEKLMSWSSLAALPHNEEDEEDELNNIEEQQNEINVLLPPSNPLEKQIPSWLPNFPPDHTYKFTPEFNHPITDLKTIKKEIVKESQESEKALLNLNKSLSHISSASNTPQPPGLDDEDAIEQQLEIWGNALEERKPTITEKSFNENNIEQYAKYRVELARERVTKFEVNQLKRTKNPFLKISETLYLPESPHQSHKTIQKTIELQFRKSMTLFMHNLPKVQKLKKEKIRMAKEERAKSLKRRQEELISQRTKREQDEGHDLELLLNNEHARDAADDTTTPNALNNSTIVINTNAEDEDDDINLFGILGSSEDENEMSSMPAENLVAESEPPTMTAQDTTNTTPVAHNTTNIDATTSHSPHSTPNENAPTSPPADIATDHDITM</sequence>
<comment type="function">
    <text evidence="3 4 5 6 7 10">Functions as a component of the DNA-binding general transcription factor complex TFIID. Binding of TFIID to a promoter (with or without TATA element) is the initial step in pre-initiation complex (PIC) formation. TFIID plays a key role in the regulation of gene expression by RNA polymerase II through different activities such as transcription activator interaction, core promoter recognition and selectivity, TFIIA and TFIIB interaction, chromatin modification (histone acetylation by TAF1), facilitation of DNA opening and initiation of transcription.</text>
</comment>
<comment type="subunit">
    <text evidence="3">In TFIID, TAF8 heterodimerizes with TAF10. The 1.2 MDa TFIID complex is composed of TATA binding protein (TBP) and the 14 TBP-associated factors. One copy of each TAF1, TAF2, TAF3, TAF7, TAF8, TAF11, TAF13, two copies of each TAF4, TAF5, TAF6, TAF9, TAF10, TAF12, and three copies of TAF14.</text>
</comment>
<comment type="interaction">
    <interactant intactId="EBI-27947">
        <id>Q03750</id>
    </interactant>
    <interactant intactId="EBI-18889">
        <id>Q12030</id>
        <label>TAF10</label>
    </interactant>
    <organismsDiffer>false</organismsDiffer>
    <experiments>8</experiments>
</comment>
<comment type="subcellular location">
    <subcellularLocation>
        <location evidence="8">Nucleus</location>
    </subcellularLocation>
</comment>
<comment type="miscellaneous">
    <text evidence="9">Present with 4684 (+/-522) molecules/cell in log phase SD medium.</text>
</comment>
<comment type="similarity">
    <text evidence="11">Belongs to the TAF8 family.</text>
</comment>
<reference key="1">
    <citation type="journal article" date="1997" name="Nature">
        <title>The nucleotide sequence of Saccharomyces cerevisiae chromosome XIII.</title>
        <authorList>
            <person name="Bowman S."/>
            <person name="Churcher C.M."/>
            <person name="Badcock K."/>
            <person name="Brown D."/>
            <person name="Chillingworth T."/>
            <person name="Connor R."/>
            <person name="Dedman K."/>
            <person name="Devlin K."/>
            <person name="Gentles S."/>
            <person name="Hamlin N."/>
            <person name="Hunt S."/>
            <person name="Jagels K."/>
            <person name="Lye G."/>
            <person name="Moule S."/>
            <person name="Odell C."/>
            <person name="Pearson D."/>
            <person name="Rajandream M.A."/>
            <person name="Rice P."/>
            <person name="Skelton J."/>
            <person name="Walsh S.V."/>
            <person name="Whitehead S."/>
            <person name="Barrell B.G."/>
        </authorList>
    </citation>
    <scope>NUCLEOTIDE SEQUENCE [LARGE SCALE GENOMIC DNA]</scope>
    <source>
        <strain>ATCC 204508 / S288c</strain>
    </source>
</reference>
<reference key="2">
    <citation type="journal article" date="2014" name="G3 (Bethesda)">
        <title>The reference genome sequence of Saccharomyces cerevisiae: Then and now.</title>
        <authorList>
            <person name="Engel S.R."/>
            <person name="Dietrich F.S."/>
            <person name="Fisk D.G."/>
            <person name="Binkley G."/>
            <person name="Balakrishnan R."/>
            <person name="Costanzo M.C."/>
            <person name="Dwight S.S."/>
            <person name="Hitz B.C."/>
            <person name="Karra K."/>
            <person name="Nash R.S."/>
            <person name="Weng S."/>
            <person name="Wong E.D."/>
            <person name="Lloyd P."/>
            <person name="Skrzypek M.S."/>
            <person name="Miyasato S.R."/>
            <person name="Simison M."/>
            <person name="Cherry J.M."/>
        </authorList>
    </citation>
    <scope>GENOME REANNOTATION</scope>
    <source>
        <strain>ATCC 204508 / S288c</strain>
    </source>
</reference>
<reference key="3">
    <citation type="journal article" date="1998" name="Cell">
        <title>Human TAF(II)28 and TAF(II)18 interact through a histone fold encoded by atypical evolutionary conserved motifs also found in the SPT3 family.</title>
        <authorList>
            <person name="Birck C."/>
            <person name="Poch O."/>
            <person name="Romier C."/>
            <person name="Ruff M."/>
            <person name="Mengus G."/>
            <person name="Lavigne A.C."/>
            <person name="Davidson I."/>
            <person name="Moras D."/>
        </authorList>
    </citation>
    <scope>FUNCTION</scope>
    <scope>TAF-TAF INTERACTION THROUGH HISTONE-FOLD DOMAIN</scope>
</reference>
<reference key="4">
    <citation type="journal article" date="2000" name="J. Biol. Chem.">
        <title>Identification of two novel TAF subunits of the yeast Saccharomyces cerevisiae TFIID complex.</title>
        <authorList>
            <person name="Sanders S.L."/>
            <person name="Weil P.A."/>
        </authorList>
    </citation>
    <scope>FUNCTION</scope>
    <scope>SUBUNIT</scope>
</reference>
<reference key="5">
    <citation type="journal article" date="2001" name="Mol. Cell. Biol.">
        <title>Histone folds mediate selective heterodimerization of yeast TAF(II)25 with TFIID components yTAF(II)47 and yTAF(II)65 and with SAGA component ySPT7.</title>
        <authorList>
            <person name="Gangloff Y.G."/>
            <person name="Sanders S.L."/>
            <person name="Romier C."/>
            <person name="Kirschner D.B."/>
            <person name="Weil P.A."/>
            <person name="Tora L."/>
            <person name="Davidson I."/>
        </authorList>
    </citation>
    <scope>FUNCTION</scope>
    <scope>INTERACTION IN TFIID AND SAGA</scope>
</reference>
<reference key="6">
    <citation type="journal article" date="2001" name="Trends Biochem. Sci.">
        <title>The histone fold is a key structural motif of transcription factor TFIID.</title>
        <authorList>
            <person name="Gangloff Y.G."/>
            <person name="Romier C."/>
            <person name="Thuault S."/>
            <person name="Werten S."/>
            <person name="Davidson I."/>
        </authorList>
    </citation>
    <scope>FUNCTION</scope>
    <scope>HISTONE-FOLD DOMAIN CHARACTERIZATION</scope>
</reference>
<reference key="7">
    <citation type="journal article" date="2002" name="Mol. Cell. Biol.">
        <title>Molecular characterization of Saccharomyces cerevisiae TFIID.</title>
        <authorList>
            <person name="Sanders S.L."/>
            <person name="Garbett K.A."/>
            <person name="Weil P.A."/>
        </authorList>
    </citation>
    <scope>FUNCTION</scope>
    <scope>TFIID STOICHIOMETRY</scope>
</reference>
<reference key="8">
    <citation type="journal article" date="2002" name="Plant Mol. Biol.">
        <title>Multi-protein complexes in eukaryotic gene transcription.</title>
        <authorList>
            <person name="Martinez E."/>
        </authorList>
    </citation>
    <scope>FUNCTION</scope>
</reference>
<reference key="9">
    <citation type="journal article" date="2003" name="Nature">
        <title>Global analysis of protein localization in budding yeast.</title>
        <authorList>
            <person name="Huh W.-K."/>
            <person name="Falvo J.V."/>
            <person name="Gerke L.C."/>
            <person name="Carroll A.S."/>
            <person name="Howson R.W."/>
            <person name="Weissman J.S."/>
            <person name="O'Shea E.K."/>
        </authorList>
    </citation>
    <scope>SUBCELLULAR LOCATION [LARGE SCALE ANALYSIS]</scope>
</reference>
<reference key="10">
    <citation type="journal article" date="2003" name="Nature">
        <title>Global analysis of protein expression in yeast.</title>
        <authorList>
            <person name="Ghaemmaghami S."/>
            <person name="Huh W.-K."/>
            <person name="Bower K."/>
            <person name="Howson R.W."/>
            <person name="Belle A."/>
            <person name="Dephoure N."/>
            <person name="O'Shea E.K."/>
            <person name="Weissman J.S."/>
        </authorList>
    </citation>
    <scope>LEVEL OF PROTEIN EXPRESSION [LARGE SCALE ANALYSIS]</scope>
</reference>
<reference key="11">
    <citation type="journal article" date="2002" name="EMBO J.">
        <title>Mapping histone fold TAFs within yeast TFIID.</title>
        <authorList>
            <person name="Leurent C."/>
            <person name="Sanders S.L."/>
            <person name="Ruhlmann C."/>
            <person name="Mallouh V."/>
            <person name="Weil P.A."/>
            <person name="Kirschner D.B."/>
            <person name="Tora L."/>
            <person name="Schultz P."/>
        </authorList>
    </citation>
    <scope>3D-STRUCTURE</scope>
    <scope>ELECTRON MICROSCOPY OF TFIID</scope>
</reference>
<reference key="12">
    <citation type="journal article" date="2008" name="Mol. Cell. Proteomics">
        <title>A multidimensional chromatography technology for in-depth phosphoproteome analysis.</title>
        <authorList>
            <person name="Albuquerque C.P."/>
            <person name="Smolka M.B."/>
            <person name="Payne S.H."/>
            <person name="Bafna V."/>
            <person name="Eng J."/>
            <person name="Zhou H."/>
        </authorList>
    </citation>
    <scope>PHOSPHORYLATION [LARGE SCALE ANALYSIS] AT SER-269</scope>
    <scope>IDENTIFICATION BY MASS SPECTROMETRY [LARGE SCALE ANALYSIS]</scope>
</reference>
<reference key="13">
    <citation type="journal article" date="2012" name="Proc. Natl. Acad. Sci. U.S.A.">
        <title>N-terminal acetylome analyses and functional insights of the N-terminal acetyltransferase NatB.</title>
        <authorList>
            <person name="Van Damme P."/>
            <person name="Lasa M."/>
            <person name="Polevoda B."/>
            <person name="Gazquez C."/>
            <person name="Elosegui-Artola A."/>
            <person name="Kim D.S."/>
            <person name="De Juan-Pardo E."/>
            <person name="Demeyer K."/>
            <person name="Hole K."/>
            <person name="Larrea E."/>
            <person name="Timmerman E."/>
            <person name="Prieto J."/>
            <person name="Arnesen T."/>
            <person name="Sherman F."/>
            <person name="Gevaert K."/>
            <person name="Aldabe R."/>
        </authorList>
    </citation>
    <scope>IDENTIFICATION BY MASS SPECTROMETRY [LARGE SCALE ANALYSIS]</scope>
</reference>
<accession>Q03750</accession>
<accession>D6W0H0</accession>
<proteinExistence type="evidence at protein level"/>
<gene>
    <name type="primary">TAF8</name>
    <name type="synonym">TAF65</name>
    <name type="ordered locus">YML114C</name>
    <name type="ORF">YM8339.05C</name>
</gene>
<feature type="chain" id="PRO_0000118887" description="Transcription initiation factor TFIID subunit 8">
    <location>
        <begin position="1"/>
        <end position="510"/>
    </location>
</feature>
<feature type="domain" description="Histone-fold">
    <location>
        <begin position="37"/>
        <end position="103"/>
    </location>
</feature>
<feature type="region of interest" description="Disordered" evidence="2">
    <location>
        <begin position="361"/>
        <end position="382"/>
    </location>
</feature>
<feature type="region of interest" description="Disordered" evidence="2">
    <location>
        <begin position="459"/>
        <end position="510"/>
    </location>
</feature>
<feature type="coiled-coil region" evidence="1">
    <location>
        <begin position="142"/>
        <end position="165"/>
    </location>
</feature>
<feature type="coiled-coil region" evidence="1">
    <location>
        <begin position="346"/>
        <end position="383"/>
    </location>
</feature>
<feature type="compositionally biased region" description="Low complexity" evidence="2">
    <location>
        <begin position="465"/>
        <end position="477"/>
    </location>
</feature>
<feature type="compositionally biased region" description="Polar residues" evidence="2">
    <location>
        <begin position="478"/>
        <end position="495"/>
    </location>
</feature>
<feature type="modified residue" description="Phosphoserine" evidence="12">
    <location>
        <position position="269"/>
    </location>
</feature>
<protein>
    <recommendedName>
        <fullName>Transcription initiation factor TFIID subunit 8</fullName>
    </recommendedName>
    <alternativeName>
        <fullName>TAFII-65</fullName>
    </alternativeName>
    <alternativeName>
        <fullName>TBP-associated factor 65 kDa</fullName>
    </alternativeName>
    <alternativeName>
        <fullName>TBP-associated factor 8</fullName>
    </alternativeName>
</protein>
<organism>
    <name type="scientific">Saccharomyces cerevisiae (strain ATCC 204508 / S288c)</name>
    <name type="common">Baker's yeast</name>
    <dbReference type="NCBI Taxonomy" id="559292"/>
    <lineage>
        <taxon>Eukaryota</taxon>
        <taxon>Fungi</taxon>
        <taxon>Dikarya</taxon>
        <taxon>Ascomycota</taxon>
        <taxon>Saccharomycotina</taxon>
        <taxon>Saccharomycetes</taxon>
        <taxon>Saccharomycetales</taxon>
        <taxon>Saccharomycetaceae</taxon>
        <taxon>Saccharomyces</taxon>
    </lineage>
</organism>
<keyword id="KW-0175">Coiled coil</keyword>
<keyword id="KW-0539">Nucleus</keyword>
<keyword id="KW-0597">Phosphoprotein</keyword>
<keyword id="KW-1185">Reference proteome</keyword>
<keyword id="KW-0804">Transcription</keyword>
<keyword id="KW-0805">Transcription regulation</keyword>
<evidence type="ECO:0000255" key="1"/>
<evidence type="ECO:0000256" key="2">
    <source>
        <dbReference type="SAM" id="MobiDB-lite"/>
    </source>
</evidence>
<evidence type="ECO:0000269" key="3">
    <source>
    </source>
</evidence>
<evidence type="ECO:0000269" key="4">
    <source>
    </source>
</evidence>
<evidence type="ECO:0000269" key="5">
    <source>
    </source>
</evidence>
<evidence type="ECO:0000269" key="6">
    <source>
    </source>
</evidence>
<evidence type="ECO:0000269" key="7">
    <source>
    </source>
</evidence>
<evidence type="ECO:0000269" key="8">
    <source>
    </source>
</evidence>
<evidence type="ECO:0000269" key="9">
    <source>
    </source>
</evidence>
<evidence type="ECO:0000269" key="10">
    <source>
    </source>
</evidence>
<evidence type="ECO:0000305" key="11"/>
<evidence type="ECO:0007744" key="12">
    <source>
    </source>
</evidence>
<name>TAF8_YEAST</name>
<dbReference type="EMBL" id="Z49210">
    <property type="protein sequence ID" value="CAA89104.1"/>
    <property type="molecule type" value="Genomic_DNA"/>
</dbReference>
<dbReference type="EMBL" id="BK006946">
    <property type="protein sequence ID" value="DAA09784.1"/>
    <property type="molecule type" value="Genomic_DNA"/>
</dbReference>
<dbReference type="PIR" id="S53958">
    <property type="entry name" value="S53958"/>
</dbReference>
<dbReference type="RefSeq" id="NP_013593.1">
    <property type="nucleotide sequence ID" value="NM_001182476.1"/>
</dbReference>
<dbReference type="SMR" id="Q03750"/>
<dbReference type="BioGRID" id="35090">
    <property type="interactions" value="308"/>
</dbReference>
<dbReference type="ComplexPortal" id="CPX-1642">
    <property type="entry name" value="General transcription factor complex TFIID"/>
</dbReference>
<dbReference type="DIP" id="DIP-1954N"/>
<dbReference type="FunCoup" id="Q03750">
    <property type="interactions" value="307"/>
</dbReference>
<dbReference type="IntAct" id="Q03750">
    <property type="interactions" value="24"/>
</dbReference>
<dbReference type="MINT" id="Q03750"/>
<dbReference type="STRING" id="4932.YML114C"/>
<dbReference type="iPTMnet" id="Q03750"/>
<dbReference type="PaxDb" id="4932-YML114C"/>
<dbReference type="PeptideAtlas" id="Q03750"/>
<dbReference type="EnsemblFungi" id="YML114C_mRNA">
    <property type="protein sequence ID" value="YML114C"/>
    <property type="gene ID" value="YML114C"/>
</dbReference>
<dbReference type="GeneID" id="854926"/>
<dbReference type="KEGG" id="sce:YML114C"/>
<dbReference type="AGR" id="SGD:S000004582"/>
<dbReference type="SGD" id="S000004582">
    <property type="gene designation" value="TAF8"/>
</dbReference>
<dbReference type="VEuPathDB" id="FungiDB:YML114C"/>
<dbReference type="eggNOG" id="KOG4336">
    <property type="taxonomic scope" value="Eukaryota"/>
</dbReference>
<dbReference type="HOGENOM" id="CLU_529078_0_0_1"/>
<dbReference type="InParanoid" id="Q03750"/>
<dbReference type="OMA" id="NICISNF"/>
<dbReference type="OrthoDB" id="2193813at2759"/>
<dbReference type="BioCyc" id="YEAST:G3O-32696-MONOMER"/>
<dbReference type="BioGRID-ORCS" id="854926">
    <property type="hits" value="9 hits in 10 CRISPR screens"/>
</dbReference>
<dbReference type="PRO" id="PR:Q03750"/>
<dbReference type="Proteomes" id="UP000002311">
    <property type="component" value="Chromosome XIII"/>
</dbReference>
<dbReference type="RNAct" id="Q03750">
    <property type="molecule type" value="protein"/>
</dbReference>
<dbReference type="GO" id="GO:0005634">
    <property type="term" value="C:nucleus"/>
    <property type="evidence" value="ECO:0007005"/>
    <property type="project" value="SGD"/>
</dbReference>
<dbReference type="GO" id="GO:0005669">
    <property type="term" value="C:transcription factor TFIID complex"/>
    <property type="evidence" value="ECO:0000314"/>
    <property type="project" value="SGD"/>
</dbReference>
<dbReference type="GO" id="GO:0045944">
    <property type="term" value="P:positive regulation of transcription by RNA polymerase II"/>
    <property type="evidence" value="ECO:0000314"/>
    <property type="project" value="ComplexPortal"/>
</dbReference>
<dbReference type="GO" id="GO:0006366">
    <property type="term" value="P:transcription by RNA polymerase II"/>
    <property type="evidence" value="ECO:0000314"/>
    <property type="project" value="SGD"/>
</dbReference>
<dbReference type="CDD" id="cd08049">
    <property type="entry name" value="TAF8"/>
    <property type="match status" value="1"/>
</dbReference>
<dbReference type="InterPro" id="IPR037818">
    <property type="entry name" value="TAF8"/>
</dbReference>
<dbReference type="InterPro" id="IPR019473">
    <property type="entry name" value="TFIID_su8_C"/>
</dbReference>
<dbReference type="PANTHER" id="PTHR46338">
    <property type="entry name" value="TRANSCRIPTION INITIATION FACTOR TFIID SUBUNIT 8"/>
    <property type="match status" value="1"/>
</dbReference>
<dbReference type="PANTHER" id="PTHR46338:SF1">
    <property type="entry name" value="TRANSCRIPTION INITIATION FACTOR TFIID SUBUNIT 8"/>
    <property type="match status" value="1"/>
</dbReference>
<dbReference type="Pfam" id="PF10406">
    <property type="entry name" value="TAF8_C"/>
    <property type="match status" value="1"/>
</dbReference>